<accession>O36029</accession>
<reference key="1">
    <citation type="journal article" date="2002" name="Nature">
        <title>The genome sequence of Schizosaccharomyces pombe.</title>
        <authorList>
            <person name="Wood V."/>
            <person name="Gwilliam R."/>
            <person name="Rajandream M.A."/>
            <person name="Lyne M.H."/>
            <person name="Lyne R."/>
            <person name="Stewart A."/>
            <person name="Sgouros J.G."/>
            <person name="Peat N."/>
            <person name="Hayles J."/>
            <person name="Baker S.G."/>
            <person name="Basham D."/>
            <person name="Bowman S."/>
            <person name="Brooks K."/>
            <person name="Brown D."/>
            <person name="Brown S."/>
            <person name="Chillingworth T."/>
            <person name="Churcher C.M."/>
            <person name="Collins M."/>
            <person name="Connor R."/>
            <person name="Cronin A."/>
            <person name="Davis P."/>
            <person name="Feltwell T."/>
            <person name="Fraser A."/>
            <person name="Gentles S."/>
            <person name="Goble A."/>
            <person name="Hamlin N."/>
            <person name="Harris D.E."/>
            <person name="Hidalgo J."/>
            <person name="Hodgson G."/>
            <person name="Holroyd S."/>
            <person name="Hornsby T."/>
            <person name="Howarth S."/>
            <person name="Huckle E.J."/>
            <person name="Hunt S."/>
            <person name="Jagels K."/>
            <person name="James K.D."/>
            <person name="Jones L."/>
            <person name="Jones M."/>
            <person name="Leather S."/>
            <person name="McDonald S."/>
            <person name="McLean J."/>
            <person name="Mooney P."/>
            <person name="Moule S."/>
            <person name="Mungall K.L."/>
            <person name="Murphy L.D."/>
            <person name="Niblett D."/>
            <person name="Odell C."/>
            <person name="Oliver K."/>
            <person name="O'Neil S."/>
            <person name="Pearson D."/>
            <person name="Quail M.A."/>
            <person name="Rabbinowitsch E."/>
            <person name="Rutherford K.M."/>
            <person name="Rutter S."/>
            <person name="Saunders D."/>
            <person name="Seeger K."/>
            <person name="Sharp S."/>
            <person name="Skelton J."/>
            <person name="Simmonds M.N."/>
            <person name="Squares R."/>
            <person name="Squares S."/>
            <person name="Stevens K."/>
            <person name="Taylor K."/>
            <person name="Taylor R.G."/>
            <person name="Tivey A."/>
            <person name="Walsh S.V."/>
            <person name="Warren T."/>
            <person name="Whitehead S."/>
            <person name="Woodward J.R."/>
            <person name="Volckaert G."/>
            <person name="Aert R."/>
            <person name="Robben J."/>
            <person name="Grymonprez B."/>
            <person name="Weltjens I."/>
            <person name="Vanstreels E."/>
            <person name="Rieger M."/>
            <person name="Schaefer M."/>
            <person name="Mueller-Auer S."/>
            <person name="Gabel C."/>
            <person name="Fuchs M."/>
            <person name="Duesterhoeft A."/>
            <person name="Fritzc C."/>
            <person name="Holzer E."/>
            <person name="Moestl D."/>
            <person name="Hilbert H."/>
            <person name="Borzym K."/>
            <person name="Langer I."/>
            <person name="Beck A."/>
            <person name="Lehrach H."/>
            <person name="Reinhardt R."/>
            <person name="Pohl T.M."/>
            <person name="Eger P."/>
            <person name="Zimmermann W."/>
            <person name="Wedler H."/>
            <person name="Wambutt R."/>
            <person name="Purnelle B."/>
            <person name="Goffeau A."/>
            <person name="Cadieu E."/>
            <person name="Dreano S."/>
            <person name="Gloux S."/>
            <person name="Lelaure V."/>
            <person name="Mottier S."/>
            <person name="Galibert F."/>
            <person name="Aves S.J."/>
            <person name="Xiang Z."/>
            <person name="Hunt C."/>
            <person name="Moore K."/>
            <person name="Hurst S.M."/>
            <person name="Lucas M."/>
            <person name="Rochet M."/>
            <person name="Gaillardin C."/>
            <person name="Tallada V.A."/>
            <person name="Garzon A."/>
            <person name="Thode G."/>
            <person name="Daga R.R."/>
            <person name="Cruzado L."/>
            <person name="Jimenez J."/>
            <person name="Sanchez M."/>
            <person name="del Rey F."/>
            <person name="Benito J."/>
            <person name="Dominguez A."/>
            <person name="Revuelta J.L."/>
            <person name="Moreno S."/>
            <person name="Armstrong J."/>
            <person name="Forsburg S.L."/>
            <person name="Cerutti L."/>
            <person name="Lowe T."/>
            <person name="McCombie W.R."/>
            <person name="Paulsen I."/>
            <person name="Potashkin J."/>
            <person name="Shpakovski G.V."/>
            <person name="Ussery D."/>
            <person name="Barrell B.G."/>
            <person name="Nurse P."/>
        </authorList>
    </citation>
    <scope>NUCLEOTIDE SEQUENCE [LARGE SCALE GENOMIC DNA]</scope>
    <source>
        <strain>972 / ATCC 24843</strain>
    </source>
</reference>
<reference key="2">
    <citation type="journal article" date="2006" name="Nat. Biotechnol.">
        <title>ORFeome cloning and global analysis of protein localization in the fission yeast Schizosaccharomyces pombe.</title>
        <authorList>
            <person name="Matsuyama A."/>
            <person name="Arai R."/>
            <person name="Yashiroda Y."/>
            <person name="Shirai A."/>
            <person name="Kamata A."/>
            <person name="Sekido S."/>
            <person name="Kobayashi Y."/>
            <person name="Hashimoto A."/>
            <person name="Hamamoto M."/>
            <person name="Hiraoka Y."/>
            <person name="Horinouchi S."/>
            <person name="Yoshida M."/>
        </authorList>
    </citation>
    <scope>SUBCELLULAR LOCATION [LARGE SCALE ANALYSIS]</scope>
</reference>
<organism>
    <name type="scientific">Schizosaccharomyces pombe (strain 972 / ATCC 24843)</name>
    <name type="common">Fission yeast</name>
    <dbReference type="NCBI Taxonomy" id="284812"/>
    <lineage>
        <taxon>Eukaryota</taxon>
        <taxon>Fungi</taxon>
        <taxon>Dikarya</taxon>
        <taxon>Ascomycota</taxon>
        <taxon>Taphrinomycotina</taxon>
        <taxon>Schizosaccharomycetes</taxon>
        <taxon>Schizosaccharomycetales</taxon>
        <taxon>Schizosaccharomycetaceae</taxon>
        <taxon>Schizosaccharomyces</taxon>
    </lineage>
</organism>
<comment type="subcellular location">
    <subcellularLocation>
        <location evidence="2">Mitochondrion</location>
    </subcellularLocation>
</comment>
<dbReference type="EMBL" id="CU329670">
    <property type="protein sequence ID" value="CAB11720.1"/>
    <property type="molecule type" value="Genomic_DNA"/>
</dbReference>
<dbReference type="PIR" id="T38821">
    <property type="entry name" value="T38821"/>
</dbReference>
<dbReference type="RefSeq" id="NP_594760.1">
    <property type="nucleotide sequence ID" value="NM_001020187.2"/>
</dbReference>
<dbReference type="SMR" id="O36029"/>
<dbReference type="BioGRID" id="279946">
    <property type="interactions" value="2"/>
</dbReference>
<dbReference type="iPTMnet" id="O36029"/>
<dbReference type="PaxDb" id="4896-SPAC4F10.17.1"/>
<dbReference type="EnsemblFungi" id="SPAC4F10.17.1">
    <property type="protein sequence ID" value="SPAC4F10.17.1:pep"/>
    <property type="gene ID" value="SPAC4F10.17"/>
</dbReference>
<dbReference type="KEGG" id="spo:2543528"/>
<dbReference type="PomBase" id="SPAC4F10.17"/>
<dbReference type="VEuPathDB" id="FungiDB:SPAC4F10.17"/>
<dbReference type="HOGENOM" id="CLU_1982863_0_0_1"/>
<dbReference type="InParanoid" id="O36029"/>
<dbReference type="OMA" id="RIAFAWK"/>
<dbReference type="PRO" id="PR:O36029"/>
<dbReference type="Proteomes" id="UP000002485">
    <property type="component" value="Chromosome I"/>
</dbReference>
<dbReference type="GO" id="GO:0005741">
    <property type="term" value="C:mitochondrial outer membrane"/>
    <property type="evidence" value="ECO:0000266"/>
    <property type="project" value="PomBase"/>
</dbReference>
<dbReference type="GO" id="GO:0005739">
    <property type="term" value="C:mitochondrion"/>
    <property type="evidence" value="ECO:0007005"/>
    <property type="project" value="PomBase"/>
</dbReference>
<dbReference type="GO" id="GO:0005886">
    <property type="term" value="C:plasma membrane"/>
    <property type="evidence" value="ECO:0000266"/>
    <property type="project" value="PomBase"/>
</dbReference>
<dbReference type="GO" id="GO:1903138">
    <property type="term" value="P:negative regulation of cell integrity MAPK cascade"/>
    <property type="evidence" value="ECO:0000266"/>
    <property type="project" value="PomBase"/>
</dbReference>
<gene>
    <name type="ORF">SPAC4F10.17</name>
</gene>
<feature type="chain" id="PRO_0000372358" description="Uncharacterized protein C4F10.17">
    <location>
        <begin position="1"/>
        <end position="123"/>
    </location>
</feature>
<feature type="region of interest" description="Disordered" evidence="1">
    <location>
        <begin position="34"/>
        <end position="123"/>
    </location>
</feature>
<feature type="compositionally biased region" description="Basic and acidic residues" evidence="1">
    <location>
        <begin position="50"/>
        <end position="60"/>
    </location>
</feature>
<feature type="compositionally biased region" description="Basic and acidic residues" evidence="1">
    <location>
        <begin position="74"/>
        <end position="100"/>
    </location>
</feature>
<feature type="compositionally biased region" description="Basic and acidic residues" evidence="1">
    <location>
        <begin position="107"/>
        <end position="123"/>
    </location>
</feature>
<sequence>MAFRAARIAFAWKATNPANTTIRQYIKETLEEAPEKISQTVKKATGKASKKIDENKDKSPQEMAENAKQSVKQTAKDAKDTDYQQKAKDAGKKIKEEFSQRSENVLEETRREGMNRDGGVKKE</sequence>
<keyword id="KW-0496">Mitochondrion</keyword>
<keyword id="KW-1185">Reference proteome</keyword>
<name>YEKH_SCHPO</name>
<evidence type="ECO:0000256" key="1">
    <source>
        <dbReference type="SAM" id="MobiDB-lite"/>
    </source>
</evidence>
<evidence type="ECO:0000269" key="2">
    <source>
    </source>
</evidence>
<proteinExistence type="predicted"/>
<protein>
    <recommendedName>
        <fullName>Uncharacterized protein C4F10.17</fullName>
    </recommendedName>
</protein>